<sequence>MTHPVVRFAPSPTGRLHVGNVRTALINWMFSRGQQGKFILRIDDTDLERSTAEHEEALKVDLTWLGLTWDDSFSQSHRFANYDAAADKLRALHLLYPCYETAEELDVKRKIAQTRGRPPVYDRAALSLTAQDRADLEAKGRKPHWRFKLSGERVEWNDLVRGPQSIDTASVSDPILIREDGSYLYTLPSVVDDIEAGITHVVRGEDHVTNSGAQIEIFMALGGKAPEMAHTPLLIGADGAALSKRIGSLSMGELRARGYEPMAICSHLAKLGTSDNIEARATLEQLCEEFSFSKIGRAPARFDDNDLNALNAALVHAMPFEAVRERLITLDARAASEPFWLAVRENCTFVADAISWVDMVYGSPAPLVAEEDREFISGAAMYLPEGELTTESWSAWTNALKAATGRKGRGLFMPLRKALTGAEHGPEMSAVLPLIGREKVLQRLS</sequence>
<accession>Q0BZ24</accession>
<reference key="1">
    <citation type="journal article" date="2006" name="J. Bacteriol.">
        <title>Comparative genomic evidence for a close relationship between the dimorphic prosthecate bacteria Hyphomonas neptunium and Caulobacter crescentus.</title>
        <authorList>
            <person name="Badger J.H."/>
            <person name="Hoover T.R."/>
            <person name="Brun Y.V."/>
            <person name="Weiner R.M."/>
            <person name="Laub M.T."/>
            <person name="Alexandre G."/>
            <person name="Mrazek J."/>
            <person name="Ren Q."/>
            <person name="Paulsen I.T."/>
            <person name="Nelson K.E."/>
            <person name="Khouri H.M."/>
            <person name="Radune D."/>
            <person name="Sosa J."/>
            <person name="Dodson R.J."/>
            <person name="Sullivan S.A."/>
            <person name="Rosovitz M.J."/>
            <person name="Madupu R."/>
            <person name="Brinkac L.M."/>
            <person name="Durkin A.S."/>
            <person name="Daugherty S.C."/>
            <person name="Kothari S.P."/>
            <person name="Giglio M.G."/>
            <person name="Zhou L."/>
            <person name="Haft D.H."/>
            <person name="Selengut J.D."/>
            <person name="Davidsen T.M."/>
            <person name="Yang Q."/>
            <person name="Zafar N."/>
            <person name="Ward N.L."/>
        </authorList>
    </citation>
    <scope>NUCLEOTIDE SEQUENCE [LARGE SCALE GENOMIC DNA]</scope>
    <source>
        <strain>ATCC 15444</strain>
    </source>
</reference>
<comment type="function">
    <text evidence="1">Catalyzes the attachment of glutamate to tRNA(Glu) in a two-step reaction: glutamate is first activated by ATP to form Glu-AMP and then transferred to the acceptor end of tRNA(Glu).</text>
</comment>
<comment type="catalytic activity">
    <reaction evidence="1">
        <text>tRNA(Glu) + L-glutamate + ATP = L-glutamyl-tRNA(Glu) + AMP + diphosphate</text>
        <dbReference type="Rhea" id="RHEA:23540"/>
        <dbReference type="Rhea" id="RHEA-COMP:9663"/>
        <dbReference type="Rhea" id="RHEA-COMP:9680"/>
        <dbReference type="ChEBI" id="CHEBI:29985"/>
        <dbReference type="ChEBI" id="CHEBI:30616"/>
        <dbReference type="ChEBI" id="CHEBI:33019"/>
        <dbReference type="ChEBI" id="CHEBI:78442"/>
        <dbReference type="ChEBI" id="CHEBI:78520"/>
        <dbReference type="ChEBI" id="CHEBI:456215"/>
        <dbReference type="EC" id="6.1.1.17"/>
    </reaction>
</comment>
<comment type="subunit">
    <text evidence="1">Monomer.</text>
</comment>
<comment type="subcellular location">
    <subcellularLocation>
        <location evidence="1">Cytoplasm</location>
    </subcellularLocation>
</comment>
<comment type="similarity">
    <text evidence="1">Belongs to the class-I aminoacyl-tRNA synthetase family. Glutamate--tRNA ligase type 1 subfamily.</text>
</comment>
<proteinExistence type="inferred from homology"/>
<keyword id="KW-0030">Aminoacyl-tRNA synthetase</keyword>
<keyword id="KW-0067">ATP-binding</keyword>
<keyword id="KW-0963">Cytoplasm</keyword>
<keyword id="KW-0436">Ligase</keyword>
<keyword id="KW-0547">Nucleotide-binding</keyword>
<keyword id="KW-0648">Protein biosynthesis</keyword>
<keyword id="KW-1185">Reference proteome</keyword>
<organism>
    <name type="scientific">Hyphomonas neptunium (strain ATCC 15444)</name>
    <dbReference type="NCBI Taxonomy" id="228405"/>
    <lineage>
        <taxon>Bacteria</taxon>
        <taxon>Pseudomonadati</taxon>
        <taxon>Pseudomonadota</taxon>
        <taxon>Alphaproteobacteria</taxon>
        <taxon>Hyphomonadales</taxon>
        <taxon>Hyphomonadaceae</taxon>
        <taxon>Hyphomonas</taxon>
    </lineage>
</organism>
<evidence type="ECO:0000255" key="1">
    <source>
        <dbReference type="HAMAP-Rule" id="MF_00022"/>
    </source>
</evidence>
<protein>
    <recommendedName>
        <fullName evidence="1">Glutamate--tRNA ligase 2</fullName>
        <ecNumber evidence="1">6.1.1.17</ecNumber>
    </recommendedName>
    <alternativeName>
        <fullName evidence="1">Glutamyl-tRNA synthetase 2</fullName>
        <shortName evidence="1">GluRS 2</shortName>
    </alternativeName>
</protein>
<gene>
    <name evidence="1" type="primary">gltX2</name>
    <name type="ordered locus">HNE_2579</name>
</gene>
<name>SYE2_HYPNA</name>
<feature type="chain" id="PRO_0000367692" description="Glutamate--tRNA ligase 2">
    <location>
        <begin position="1"/>
        <end position="445"/>
    </location>
</feature>
<feature type="short sequence motif" description="'HIGH' region" evidence="1">
    <location>
        <begin position="10"/>
        <end position="20"/>
    </location>
</feature>
<feature type="short sequence motif" description="'KMSKS' region" evidence="1">
    <location>
        <begin position="241"/>
        <end position="245"/>
    </location>
</feature>
<feature type="binding site" evidence="1">
    <location>
        <position position="244"/>
    </location>
    <ligand>
        <name>ATP</name>
        <dbReference type="ChEBI" id="CHEBI:30616"/>
    </ligand>
</feature>
<dbReference type="EC" id="6.1.1.17" evidence="1"/>
<dbReference type="EMBL" id="CP000158">
    <property type="protein sequence ID" value="ABI77356.1"/>
    <property type="molecule type" value="Genomic_DNA"/>
</dbReference>
<dbReference type="SMR" id="Q0BZ24"/>
<dbReference type="STRING" id="228405.HNE_2579"/>
<dbReference type="KEGG" id="hne:HNE_2579"/>
<dbReference type="eggNOG" id="COG0008">
    <property type="taxonomic scope" value="Bacteria"/>
</dbReference>
<dbReference type="HOGENOM" id="CLU_015768_6_1_5"/>
<dbReference type="Proteomes" id="UP000001959">
    <property type="component" value="Chromosome"/>
</dbReference>
<dbReference type="GO" id="GO:0005737">
    <property type="term" value="C:cytoplasm"/>
    <property type="evidence" value="ECO:0007669"/>
    <property type="project" value="UniProtKB-SubCell"/>
</dbReference>
<dbReference type="GO" id="GO:0005524">
    <property type="term" value="F:ATP binding"/>
    <property type="evidence" value="ECO:0007669"/>
    <property type="project" value="UniProtKB-UniRule"/>
</dbReference>
<dbReference type="GO" id="GO:0004818">
    <property type="term" value="F:glutamate-tRNA ligase activity"/>
    <property type="evidence" value="ECO:0007669"/>
    <property type="project" value="UniProtKB-UniRule"/>
</dbReference>
<dbReference type="GO" id="GO:0000049">
    <property type="term" value="F:tRNA binding"/>
    <property type="evidence" value="ECO:0007669"/>
    <property type="project" value="InterPro"/>
</dbReference>
<dbReference type="GO" id="GO:0006424">
    <property type="term" value="P:glutamyl-tRNA aminoacylation"/>
    <property type="evidence" value="ECO:0007669"/>
    <property type="project" value="UniProtKB-UniRule"/>
</dbReference>
<dbReference type="Gene3D" id="1.10.10.350">
    <property type="match status" value="1"/>
</dbReference>
<dbReference type="Gene3D" id="3.40.50.620">
    <property type="entry name" value="HUPs"/>
    <property type="match status" value="1"/>
</dbReference>
<dbReference type="HAMAP" id="MF_00022">
    <property type="entry name" value="Glu_tRNA_synth_type1"/>
    <property type="match status" value="1"/>
</dbReference>
<dbReference type="InterPro" id="IPR045462">
    <property type="entry name" value="aa-tRNA-synth_I_cd-bd"/>
</dbReference>
<dbReference type="InterPro" id="IPR020751">
    <property type="entry name" value="aa-tRNA-synth_I_codon-bd_sub2"/>
</dbReference>
<dbReference type="InterPro" id="IPR001412">
    <property type="entry name" value="aa-tRNA-synth_I_CS"/>
</dbReference>
<dbReference type="InterPro" id="IPR008925">
    <property type="entry name" value="aa_tRNA-synth_I_cd-bd_sf"/>
</dbReference>
<dbReference type="InterPro" id="IPR004527">
    <property type="entry name" value="Glu-tRNA-ligase_bac/mito"/>
</dbReference>
<dbReference type="InterPro" id="IPR000924">
    <property type="entry name" value="Glu/Gln-tRNA-synth"/>
</dbReference>
<dbReference type="InterPro" id="IPR020058">
    <property type="entry name" value="Glu/Gln-tRNA-synth_Ib_cat-dom"/>
</dbReference>
<dbReference type="InterPro" id="IPR049940">
    <property type="entry name" value="GluQ/Sye"/>
</dbReference>
<dbReference type="InterPro" id="IPR014729">
    <property type="entry name" value="Rossmann-like_a/b/a_fold"/>
</dbReference>
<dbReference type="NCBIfam" id="TIGR00464">
    <property type="entry name" value="gltX_bact"/>
    <property type="match status" value="1"/>
</dbReference>
<dbReference type="PANTHER" id="PTHR43311">
    <property type="entry name" value="GLUTAMATE--TRNA LIGASE"/>
    <property type="match status" value="1"/>
</dbReference>
<dbReference type="PANTHER" id="PTHR43311:SF2">
    <property type="entry name" value="GLUTAMATE--TRNA LIGASE, MITOCHONDRIAL-RELATED"/>
    <property type="match status" value="1"/>
</dbReference>
<dbReference type="Pfam" id="PF19269">
    <property type="entry name" value="Anticodon_2"/>
    <property type="match status" value="1"/>
</dbReference>
<dbReference type="Pfam" id="PF00749">
    <property type="entry name" value="tRNA-synt_1c"/>
    <property type="match status" value="1"/>
</dbReference>
<dbReference type="PRINTS" id="PR00987">
    <property type="entry name" value="TRNASYNTHGLU"/>
</dbReference>
<dbReference type="SUPFAM" id="SSF48163">
    <property type="entry name" value="An anticodon-binding domain of class I aminoacyl-tRNA synthetases"/>
    <property type="match status" value="1"/>
</dbReference>
<dbReference type="SUPFAM" id="SSF52374">
    <property type="entry name" value="Nucleotidylyl transferase"/>
    <property type="match status" value="1"/>
</dbReference>
<dbReference type="PROSITE" id="PS00178">
    <property type="entry name" value="AA_TRNA_LIGASE_I"/>
    <property type="match status" value="1"/>
</dbReference>